<evidence type="ECO:0000250" key="1"/>
<evidence type="ECO:0000250" key="2">
    <source>
        <dbReference type="UniProtKB" id="Q8K3J9"/>
    </source>
</evidence>
<evidence type="ECO:0000250" key="3">
    <source>
        <dbReference type="UniProtKB" id="Q9NQ84"/>
    </source>
</evidence>
<evidence type="ECO:0000255" key="4"/>
<evidence type="ECO:0000305" key="5"/>
<name>GPC5C_BOVIN</name>
<dbReference type="EMBL" id="BC110241">
    <property type="protein sequence ID" value="AAI10242.2"/>
    <property type="molecule type" value="mRNA"/>
</dbReference>
<dbReference type="RefSeq" id="NP_001258939.1">
    <property type="nucleotide sequence ID" value="NM_001272010.1"/>
</dbReference>
<dbReference type="SMR" id="Q2YDG0"/>
<dbReference type="FunCoup" id="Q2YDG0">
    <property type="interactions" value="24"/>
</dbReference>
<dbReference type="STRING" id="9913.ENSBTAP00000062937"/>
<dbReference type="GlyCosmos" id="Q2YDG0">
    <property type="glycosylation" value="1 site, No reported glycans"/>
</dbReference>
<dbReference type="GlyGen" id="Q2YDG0">
    <property type="glycosylation" value="1 site"/>
</dbReference>
<dbReference type="PaxDb" id="9913-ENSBTAP00000024834"/>
<dbReference type="GeneID" id="535664"/>
<dbReference type="KEGG" id="bta:535664"/>
<dbReference type="CTD" id="55890"/>
<dbReference type="eggNOG" id="ENOG502QQEH">
    <property type="taxonomic scope" value="Eukaryota"/>
</dbReference>
<dbReference type="InParanoid" id="Q2YDG0"/>
<dbReference type="OrthoDB" id="9880600at2759"/>
<dbReference type="Proteomes" id="UP000009136">
    <property type="component" value="Unplaced"/>
</dbReference>
<dbReference type="GO" id="GO:0070062">
    <property type="term" value="C:extracellular exosome"/>
    <property type="evidence" value="ECO:0000318"/>
    <property type="project" value="GO_Central"/>
</dbReference>
<dbReference type="GO" id="GO:0043231">
    <property type="term" value="C:intracellular membrane-bounded organelle"/>
    <property type="evidence" value="ECO:0000318"/>
    <property type="project" value="GO_Central"/>
</dbReference>
<dbReference type="GO" id="GO:0005886">
    <property type="term" value="C:plasma membrane"/>
    <property type="evidence" value="ECO:0000318"/>
    <property type="project" value="GO_Central"/>
</dbReference>
<dbReference type="GO" id="GO:0043235">
    <property type="term" value="C:receptor complex"/>
    <property type="evidence" value="ECO:0000318"/>
    <property type="project" value="GO_Central"/>
</dbReference>
<dbReference type="GO" id="GO:0004930">
    <property type="term" value="F:G protein-coupled receptor activity"/>
    <property type="evidence" value="ECO:0007669"/>
    <property type="project" value="UniProtKB-KW"/>
</dbReference>
<dbReference type="GO" id="GO:0030295">
    <property type="term" value="F:protein kinase activator activity"/>
    <property type="evidence" value="ECO:0000318"/>
    <property type="project" value="GO_Central"/>
</dbReference>
<dbReference type="CDD" id="cd15277">
    <property type="entry name" value="7tmC_RAIG3_GPRC5C"/>
    <property type="match status" value="1"/>
</dbReference>
<dbReference type="InterPro" id="IPR017978">
    <property type="entry name" value="GPCR_3_C"/>
</dbReference>
<dbReference type="InterPro" id="IPR051753">
    <property type="entry name" value="RA-inducible_GPCR3"/>
</dbReference>
<dbReference type="PANTHER" id="PTHR14511">
    <property type="entry name" value="G PROTEIN COUPLED RECEPTOR, CLASS C, GROUP 5"/>
    <property type="match status" value="1"/>
</dbReference>
<dbReference type="PANTHER" id="PTHR14511:SF15">
    <property type="entry name" value="G-PROTEIN COUPLED RECEPTOR FAMILY C GROUP 5 MEMBER C"/>
    <property type="match status" value="1"/>
</dbReference>
<dbReference type="Pfam" id="PF00003">
    <property type="entry name" value="7tm_3"/>
    <property type="match status" value="1"/>
</dbReference>
<dbReference type="PROSITE" id="PS50259">
    <property type="entry name" value="G_PROTEIN_RECEP_F3_4"/>
    <property type="match status" value="1"/>
</dbReference>
<reference key="1">
    <citation type="submission" date="2005-11" db="EMBL/GenBank/DDBJ databases">
        <authorList>
            <consortium name="NIH - Mammalian Gene Collection (MGC) project"/>
        </authorList>
    </citation>
    <scope>NUCLEOTIDE SEQUENCE [LARGE SCALE MRNA]</scope>
    <source>
        <strain>Crossbred X Angus</strain>
        <tissue>Liver</tissue>
    </source>
</reference>
<keyword id="KW-1003">Cell membrane</keyword>
<keyword id="KW-0297">G-protein coupled receptor</keyword>
<keyword id="KW-0325">Glycoprotein</keyword>
<keyword id="KW-0472">Membrane</keyword>
<keyword id="KW-0597">Phosphoprotein</keyword>
<keyword id="KW-0675">Receptor</keyword>
<keyword id="KW-1185">Reference proteome</keyword>
<keyword id="KW-0732">Signal</keyword>
<keyword id="KW-0807">Transducer</keyword>
<keyword id="KW-0812">Transmembrane</keyword>
<keyword id="KW-1133">Transmembrane helix</keyword>
<gene>
    <name type="primary">GPRC5C</name>
</gene>
<sequence>MAIHRTVLMCLGLPLFLLPGARAQEQAPPGCSPDLNPLYYNLCDRSEAWGIILEAVAGAGVVTTFVLTIILVASLPFVQDTKKRSLLGTQVFFLLGTLGLFCLVFACVVKPSFSTCASRRFLFGVLFAICFSCLVAHVLALHFLVRKNHGPRGWVIFLVALLLSLVEVIINTEWLIITLVRGAGTEGDALGNGSAGWVAVSPCAIANADFVMALIYVMLLLLCAFSGAWSALCGRFKRWRKHGVFILLTTTASIAVWVVWIVMYTYGNRQHNSPTWDDPTLAIALATNAWAFVLFYVIPEVSQVTRSSPEQSYQGDLYPTRGVGYETILKEQKGQSMFVENKAFSMDEPASAKRPVSPYSGYNGQLLTSMYQPTEMTLMHKAPSDGAYDVILPRATANSQVTGSANSTLRAEDIYAAQGRQEATLPKEGKNSQVFRNPYVWD</sequence>
<proteinExistence type="evidence at transcript level"/>
<accession>Q2YDG0</accession>
<protein>
    <recommendedName>
        <fullName>G-protein coupled receptor family C group 5 member C</fullName>
    </recommendedName>
</protein>
<organism>
    <name type="scientific">Bos taurus</name>
    <name type="common">Bovine</name>
    <dbReference type="NCBI Taxonomy" id="9913"/>
    <lineage>
        <taxon>Eukaryota</taxon>
        <taxon>Metazoa</taxon>
        <taxon>Chordata</taxon>
        <taxon>Craniata</taxon>
        <taxon>Vertebrata</taxon>
        <taxon>Euteleostomi</taxon>
        <taxon>Mammalia</taxon>
        <taxon>Eutheria</taxon>
        <taxon>Laurasiatheria</taxon>
        <taxon>Artiodactyla</taxon>
        <taxon>Ruminantia</taxon>
        <taxon>Pecora</taxon>
        <taxon>Bovidae</taxon>
        <taxon>Bovinae</taxon>
        <taxon>Bos</taxon>
    </lineage>
</organism>
<feature type="signal peptide" evidence="4">
    <location>
        <begin position="1"/>
        <end position="23"/>
    </location>
</feature>
<feature type="chain" id="PRO_0000251135" description="G-protein coupled receptor family C group 5 member C">
    <location>
        <begin position="24"/>
        <end position="442"/>
    </location>
</feature>
<feature type="topological domain" description="Extracellular" evidence="4">
    <location>
        <begin position="24"/>
        <end position="50"/>
    </location>
</feature>
<feature type="transmembrane region" description="Helical; Name=1" evidence="4">
    <location>
        <begin position="51"/>
        <end position="71"/>
    </location>
</feature>
<feature type="topological domain" description="Cytoplasmic" evidence="4">
    <location>
        <begin position="72"/>
        <end position="85"/>
    </location>
</feature>
<feature type="transmembrane region" description="Helical; Name=2" evidence="4">
    <location>
        <begin position="86"/>
        <end position="106"/>
    </location>
</feature>
<feature type="topological domain" description="Extracellular" evidence="4">
    <location>
        <begin position="107"/>
        <end position="120"/>
    </location>
</feature>
<feature type="transmembrane region" description="Helical; Name=3" evidence="4">
    <location>
        <begin position="121"/>
        <end position="141"/>
    </location>
</feature>
<feature type="topological domain" description="Cytoplasmic" evidence="4">
    <location>
        <begin position="142"/>
        <end position="155"/>
    </location>
</feature>
<feature type="transmembrane region" description="Helical; Name=4" evidence="4">
    <location>
        <begin position="156"/>
        <end position="176"/>
    </location>
</feature>
<feature type="topological domain" description="Extracellular" evidence="4">
    <location>
        <begin position="177"/>
        <end position="209"/>
    </location>
</feature>
<feature type="transmembrane region" description="Helical; Name=5" evidence="4">
    <location>
        <begin position="210"/>
        <end position="230"/>
    </location>
</feature>
<feature type="topological domain" description="Cytoplasmic" evidence="4">
    <location>
        <begin position="231"/>
        <end position="242"/>
    </location>
</feature>
<feature type="transmembrane region" description="Helical; Name=6" evidence="4">
    <location>
        <begin position="243"/>
        <end position="263"/>
    </location>
</feature>
<feature type="topological domain" description="Extracellular" evidence="4">
    <location>
        <begin position="264"/>
        <end position="280"/>
    </location>
</feature>
<feature type="transmembrane region" description="Helical; Name=7" evidence="4">
    <location>
        <begin position="281"/>
        <end position="301"/>
    </location>
</feature>
<feature type="topological domain" description="Cytoplasmic" evidence="4">
    <location>
        <begin position="302"/>
        <end position="442"/>
    </location>
</feature>
<feature type="modified residue" description="Phosphoserine" evidence="3">
    <location>
        <position position="345"/>
    </location>
</feature>
<feature type="modified residue" description="Phosphoserine" evidence="3">
    <location>
        <position position="384"/>
    </location>
</feature>
<feature type="modified residue" description="Phosphoserine" evidence="2">
    <location>
        <position position="404"/>
    </location>
</feature>
<feature type="modified residue" description="Phosphoserine" evidence="2">
    <location>
        <position position="407"/>
    </location>
</feature>
<feature type="modified residue" description="Phosphotyrosine" evidence="2">
    <location>
        <position position="415"/>
    </location>
</feature>
<feature type="modified residue" description="Phosphothreonine" evidence="3">
    <location>
        <position position="424"/>
    </location>
</feature>
<feature type="glycosylation site" description="N-linked (GlcNAc...) asparagine" evidence="4">
    <location>
        <position position="192"/>
    </location>
</feature>
<comment type="function">
    <text evidence="1">This retinoic acid-inducible G-protein coupled receptor provide evidence for a possible interaction between retinoid and G-protein signaling pathways.</text>
</comment>
<comment type="subcellular location">
    <subcellularLocation>
        <location>Cell membrane</location>
        <topology>Multi-pass membrane protein</topology>
    </subcellularLocation>
</comment>
<comment type="similarity">
    <text evidence="5">Belongs to the G-protein coupled receptor 3 family.</text>
</comment>